<gene>
    <name evidence="1" type="primary">mnmG</name>
    <name evidence="1" type="synonym">gidA</name>
    <name type="ordered locus">SeD_A4266</name>
</gene>
<accession>B5FN44</accession>
<reference key="1">
    <citation type="journal article" date="2011" name="J. Bacteriol.">
        <title>Comparative genomics of 28 Salmonella enterica isolates: evidence for CRISPR-mediated adaptive sublineage evolution.</title>
        <authorList>
            <person name="Fricke W.F."/>
            <person name="Mammel M.K."/>
            <person name="McDermott P.F."/>
            <person name="Tartera C."/>
            <person name="White D.G."/>
            <person name="Leclerc J.E."/>
            <person name="Ravel J."/>
            <person name="Cebula T.A."/>
        </authorList>
    </citation>
    <scope>NUCLEOTIDE SEQUENCE [LARGE SCALE GENOMIC DNA]</scope>
    <source>
        <strain>CT_02021853</strain>
    </source>
</reference>
<evidence type="ECO:0000255" key="1">
    <source>
        <dbReference type="HAMAP-Rule" id="MF_00129"/>
    </source>
</evidence>
<protein>
    <recommendedName>
        <fullName evidence="1">tRNA uridine 5-carboxymethylaminomethyl modification enzyme MnmG</fullName>
    </recommendedName>
    <alternativeName>
        <fullName evidence="1">Glucose-inhibited division protein A</fullName>
    </alternativeName>
</protein>
<dbReference type="EMBL" id="CP001144">
    <property type="protein sequence ID" value="ACH73890.1"/>
    <property type="molecule type" value="Genomic_DNA"/>
</dbReference>
<dbReference type="RefSeq" id="WP_000499875.1">
    <property type="nucleotide sequence ID" value="NC_011205.1"/>
</dbReference>
<dbReference type="SMR" id="B5FN44"/>
<dbReference type="KEGG" id="sed:SeD_A4266"/>
<dbReference type="HOGENOM" id="CLU_007831_2_2_6"/>
<dbReference type="Proteomes" id="UP000008322">
    <property type="component" value="Chromosome"/>
</dbReference>
<dbReference type="GO" id="GO:0005829">
    <property type="term" value="C:cytosol"/>
    <property type="evidence" value="ECO:0007669"/>
    <property type="project" value="TreeGrafter"/>
</dbReference>
<dbReference type="GO" id="GO:0050660">
    <property type="term" value="F:flavin adenine dinucleotide binding"/>
    <property type="evidence" value="ECO:0007669"/>
    <property type="project" value="UniProtKB-UniRule"/>
</dbReference>
<dbReference type="GO" id="GO:0030488">
    <property type="term" value="P:tRNA methylation"/>
    <property type="evidence" value="ECO:0007669"/>
    <property type="project" value="TreeGrafter"/>
</dbReference>
<dbReference type="GO" id="GO:0002098">
    <property type="term" value="P:tRNA wobble uridine modification"/>
    <property type="evidence" value="ECO:0007669"/>
    <property type="project" value="InterPro"/>
</dbReference>
<dbReference type="FunFam" id="1.10.10.1800:FF:000001">
    <property type="entry name" value="tRNA uridine 5-carboxymethylaminomethyl modification enzyme MnmG"/>
    <property type="match status" value="1"/>
</dbReference>
<dbReference type="FunFam" id="1.10.150.570:FF:000001">
    <property type="entry name" value="tRNA uridine 5-carboxymethylaminomethyl modification enzyme MnmG"/>
    <property type="match status" value="1"/>
</dbReference>
<dbReference type="FunFam" id="3.50.50.60:FF:000002">
    <property type="entry name" value="tRNA uridine 5-carboxymethylaminomethyl modification enzyme MnmG"/>
    <property type="match status" value="1"/>
</dbReference>
<dbReference type="FunFam" id="3.50.50.60:FF:000010">
    <property type="entry name" value="tRNA uridine 5-carboxymethylaminomethyl modification enzyme MnmG"/>
    <property type="match status" value="1"/>
</dbReference>
<dbReference type="Gene3D" id="3.50.50.60">
    <property type="entry name" value="FAD/NAD(P)-binding domain"/>
    <property type="match status" value="2"/>
</dbReference>
<dbReference type="Gene3D" id="1.10.150.570">
    <property type="entry name" value="GidA associated domain, C-terminal subdomain"/>
    <property type="match status" value="1"/>
</dbReference>
<dbReference type="Gene3D" id="1.10.10.1800">
    <property type="entry name" value="tRNA uridine 5-carboxymethylaminomethyl modification enzyme MnmG/GidA"/>
    <property type="match status" value="1"/>
</dbReference>
<dbReference type="HAMAP" id="MF_00129">
    <property type="entry name" value="MnmG_GidA"/>
    <property type="match status" value="1"/>
</dbReference>
<dbReference type="InterPro" id="IPR036188">
    <property type="entry name" value="FAD/NAD-bd_sf"/>
</dbReference>
<dbReference type="InterPro" id="IPR049312">
    <property type="entry name" value="GIDA_C_N"/>
</dbReference>
<dbReference type="InterPro" id="IPR004416">
    <property type="entry name" value="MnmG"/>
</dbReference>
<dbReference type="InterPro" id="IPR002218">
    <property type="entry name" value="MnmG-rel"/>
</dbReference>
<dbReference type="InterPro" id="IPR020595">
    <property type="entry name" value="MnmG-rel_CS"/>
</dbReference>
<dbReference type="InterPro" id="IPR026904">
    <property type="entry name" value="MnmG_C"/>
</dbReference>
<dbReference type="InterPro" id="IPR047001">
    <property type="entry name" value="MnmG_C_subdom"/>
</dbReference>
<dbReference type="InterPro" id="IPR044920">
    <property type="entry name" value="MnmG_C_subdom_sf"/>
</dbReference>
<dbReference type="InterPro" id="IPR040131">
    <property type="entry name" value="MnmG_N"/>
</dbReference>
<dbReference type="NCBIfam" id="TIGR00136">
    <property type="entry name" value="mnmG_gidA"/>
    <property type="match status" value="1"/>
</dbReference>
<dbReference type="PANTHER" id="PTHR11806">
    <property type="entry name" value="GLUCOSE INHIBITED DIVISION PROTEIN A"/>
    <property type="match status" value="1"/>
</dbReference>
<dbReference type="PANTHER" id="PTHR11806:SF0">
    <property type="entry name" value="PROTEIN MTO1 HOMOLOG, MITOCHONDRIAL"/>
    <property type="match status" value="1"/>
</dbReference>
<dbReference type="Pfam" id="PF01134">
    <property type="entry name" value="GIDA"/>
    <property type="match status" value="1"/>
</dbReference>
<dbReference type="Pfam" id="PF21680">
    <property type="entry name" value="GIDA_C_1st"/>
    <property type="match status" value="1"/>
</dbReference>
<dbReference type="Pfam" id="PF13932">
    <property type="entry name" value="SAM_GIDA_C"/>
    <property type="match status" value="1"/>
</dbReference>
<dbReference type="SMART" id="SM01228">
    <property type="entry name" value="GIDA_assoc_3"/>
    <property type="match status" value="1"/>
</dbReference>
<dbReference type="SUPFAM" id="SSF51905">
    <property type="entry name" value="FAD/NAD(P)-binding domain"/>
    <property type="match status" value="1"/>
</dbReference>
<dbReference type="PROSITE" id="PS01280">
    <property type="entry name" value="GIDA_1"/>
    <property type="match status" value="1"/>
</dbReference>
<dbReference type="PROSITE" id="PS01281">
    <property type="entry name" value="GIDA_2"/>
    <property type="match status" value="1"/>
</dbReference>
<feature type="chain" id="PRO_1000095660" description="tRNA uridine 5-carboxymethylaminomethyl modification enzyme MnmG">
    <location>
        <begin position="1"/>
        <end position="629"/>
    </location>
</feature>
<feature type="binding site" evidence="1">
    <location>
        <begin position="13"/>
        <end position="18"/>
    </location>
    <ligand>
        <name>FAD</name>
        <dbReference type="ChEBI" id="CHEBI:57692"/>
    </ligand>
</feature>
<feature type="binding site" evidence="1">
    <location>
        <position position="125"/>
    </location>
    <ligand>
        <name>FAD</name>
        <dbReference type="ChEBI" id="CHEBI:57692"/>
    </ligand>
</feature>
<feature type="binding site" evidence="1">
    <location>
        <position position="180"/>
    </location>
    <ligand>
        <name>FAD</name>
        <dbReference type="ChEBI" id="CHEBI:57692"/>
    </ligand>
</feature>
<feature type="binding site" evidence="1">
    <location>
        <begin position="273"/>
        <end position="287"/>
    </location>
    <ligand>
        <name>NAD(+)</name>
        <dbReference type="ChEBI" id="CHEBI:57540"/>
    </ligand>
</feature>
<feature type="binding site" evidence="1">
    <location>
        <position position="370"/>
    </location>
    <ligand>
        <name>FAD</name>
        <dbReference type="ChEBI" id="CHEBI:57692"/>
    </ligand>
</feature>
<sequence>MFYQDPFDVIIIGGGHAGTEAAMAAARMGQQTLLLTHNIDTLGQMSCNPAIGGIGKGHLVKEVDALGGLMAKAIDQAGIQFRILNASKGPAVRATRAQADRVLYRQAVRTALENQPNLMIFQQAVEDLIVENDRVVGAVTQMGLKFRAKAVVLTVGTFLDGKIHIGLDNYSGGRAGDPPSIPLSRRLRELPLRVSRLKTGTPPRIDARTIDFSVLAQQHGDNPMPVFSFMGNASQHPQQVPCYITHTNEKTHDVIRNNLDRSPMYAGVIEGIGPRYCPSIEDKVMRFADRNQHQIFLEPEGLTSNEIYPNGISTSLPFDVQMQIVRSMQGMENAKIVRPGYAIEYDFFDPRDLKPTLESKFIHGLFFAGQINGTTGYEEAAAQGLLAGLNAARLSADKEGWAPARSQAYLGVLVDDLCTLGTKEPYRMFTSRAEYRLMLREDNADLRLTEMGRELGLVDDERWARFNEKLESIERERQRLKSTWVTPSAESADEVNAHLTTPLSREASGEDLLRRPEMTYAQLTSLAAFAPALEDEQAAEQVEIQVKYEGYIARQQDEIEKQLRNENTLLPATLDYRQVSGLSNEVIAKLNDHKPASIGQASRISGVTPAAISILLVWLKKQGMLRRSA</sequence>
<comment type="function">
    <text evidence="1">NAD-binding protein involved in the addition of a carboxymethylaminomethyl (cmnm) group at the wobble position (U34) of certain tRNAs, forming tRNA-cmnm(5)s(2)U34.</text>
</comment>
<comment type="cofactor">
    <cofactor evidence="1">
        <name>FAD</name>
        <dbReference type="ChEBI" id="CHEBI:57692"/>
    </cofactor>
</comment>
<comment type="subunit">
    <text evidence="1">Homodimer. Heterotetramer of two MnmE and two MnmG subunits.</text>
</comment>
<comment type="subcellular location">
    <subcellularLocation>
        <location evidence="1">Cytoplasm</location>
    </subcellularLocation>
</comment>
<comment type="similarity">
    <text evidence="1">Belongs to the MnmG family.</text>
</comment>
<keyword id="KW-0963">Cytoplasm</keyword>
<keyword id="KW-0274">FAD</keyword>
<keyword id="KW-0285">Flavoprotein</keyword>
<keyword id="KW-0520">NAD</keyword>
<keyword id="KW-0819">tRNA processing</keyword>
<proteinExistence type="inferred from homology"/>
<organism>
    <name type="scientific">Salmonella dublin (strain CT_02021853)</name>
    <dbReference type="NCBI Taxonomy" id="439851"/>
    <lineage>
        <taxon>Bacteria</taxon>
        <taxon>Pseudomonadati</taxon>
        <taxon>Pseudomonadota</taxon>
        <taxon>Gammaproteobacteria</taxon>
        <taxon>Enterobacterales</taxon>
        <taxon>Enterobacteriaceae</taxon>
        <taxon>Salmonella</taxon>
    </lineage>
</organism>
<name>MNMG_SALDC</name>